<proteinExistence type="inferred from homology"/>
<gene>
    <name type="primary">aroK</name>
    <name type="ordered locus">MT2614</name>
</gene>
<sequence>MAPKAVLVGLPGSGKSTIGRRLAKALGVGLLDTDVAIEQRTGRSIADIFATDGEQEFRRIEEDVVRAALADHDGVLSLGGGAVTSPGVRAALAGHTVVYLEISAAEGVRRTGGNTVRPLLAGPDRAEKYRALMAKRAPLYRRVATMRVDTNRRNPGAVVRHILSRLQVPSPSEAAT</sequence>
<reference key="1">
    <citation type="journal article" date="2002" name="J. Bacteriol.">
        <title>Whole-genome comparison of Mycobacterium tuberculosis clinical and laboratory strains.</title>
        <authorList>
            <person name="Fleischmann R.D."/>
            <person name="Alland D."/>
            <person name="Eisen J.A."/>
            <person name="Carpenter L."/>
            <person name="White O."/>
            <person name="Peterson J.D."/>
            <person name="DeBoy R.T."/>
            <person name="Dodson R.J."/>
            <person name="Gwinn M.L."/>
            <person name="Haft D.H."/>
            <person name="Hickey E.K."/>
            <person name="Kolonay J.F."/>
            <person name="Nelson W.C."/>
            <person name="Umayam L.A."/>
            <person name="Ermolaeva M.D."/>
            <person name="Salzberg S.L."/>
            <person name="Delcher A."/>
            <person name="Utterback T.R."/>
            <person name="Weidman J.F."/>
            <person name="Khouri H.M."/>
            <person name="Gill J."/>
            <person name="Mikula A."/>
            <person name="Bishai W."/>
            <person name="Jacobs W.R. Jr."/>
            <person name="Venter J.C."/>
            <person name="Fraser C.M."/>
        </authorList>
    </citation>
    <scope>NUCLEOTIDE SEQUENCE [LARGE SCALE GENOMIC DNA]</scope>
    <source>
        <strain>CDC 1551 / Oshkosh</strain>
    </source>
</reference>
<accession>P9WPY2</accession>
<accession>L0TBI1</accession>
<accession>P0A4Z2</accession>
<accession>P95014</accession>
<dbReference type="EC" id="2.7.1.71"/>
<dbReference type="EMBL" id="AE000516">
    <property type="protein sequence ID" value="AAK46924.1"/>
    <property type="molecule type" value="Genomic_DNA"/>
</dbReference>
<dbReference type="PIR" id="G70658">
    <property type="entry name" value="G70658"/>
</dbReference>
<dbReference type="RefSeq" id="WP_003413021.1">
    <property type="nucleotide sequence ID" value="NZ_KK341227.1"/>
</dbReference>
<dbReference type="SMR" id="P9WPY2"/>
<dbReference type="KEGG" id="mtc:MT2614"/>
<dbReference type="PATRIC" id="fig|83331.31.peg.2820"/>
<dbReference type="HOGENOM" id="CLU_057607_3_3_11"/>
<dbReference type="UniPathway" id="UPA00053">
    <property type="reaction ID" value="UER00088"/>
</dbReference>
<dbReference type="Proteomes" id="UP000001020">
    <property type="component" value="Chromosome"/>
</dbReference>
<dbReference type="GO" id="GO:0005829">
    <property type="term" value="C:cytosol"/>
    <property type="evidence" value="ECO:0007669"/>
    <property type="project" value="TreeGrafter"/>
</dbReference>
<dbReference type="GO" id="GO:0005524">
    <property type="term" value="F:ATP binding"/>
    <property type="evidence" value="ECO:0007669"/>
    <property type="project" value="UniProtKB-UniRule"/>
</dbReference>
<dbReference type="GO" id="GO:0000287">
    <property type="term" value="F:magnesium ion binding"/>
    <property type="evidence" value="ECO:0007669"/>
    <property type="project" value="UniProtKB-UniRule"/>
</dbReference>
<dbReference type="GO" id="GO:0004765">
    <property type="term" value="F:shikimate kinase activity"/>
    <property type="evidence" value="ECO:0007669"/>
    <property type="project" value="UniProtKB-UniRule"/>
</dbReference>
<dbReference type="GO" id="GO:0008652">
    <property type="term" value="P:amino acid biosynthetic process"/>
    <property type="evidence" value="ECO:0007669"/>
    <property type="project" value="UniProtKB-KW"/>
</dbReference>
<dbReference type="GO" id="GO:0009073">
    <property type="term" value="P:aromatic amino acid family biosynthetic process"/>
    <property type="evidence" value="ECO:0007669"/>
    <property type="project" value="UniProtKB-KW"/>
</dbReference>
<dbReference type="GO" id="GO:0009423">
    <property type="term" value="P:chorismate biosynthetic process"/>
    <property type="evidence" value="ECO:0007669"/>
    <property type="project" value="UniProtKB-UniRule"/>
</dbReference>
<dbReference type="CDD" id="cd00464">
    <property type="entry name" value="SK"/>
    <property type="match status" value="1"/>
</dbReference>
<dbReference type="FunFam" id="3.40.50.300:FF:002320">
    <property type="entry name" value="Shikimate kinase"/>
    <property type="match status" value="1"/>
</dbReference>
<dbReference type="Gene3D" id="3.40.50.300">
    <property type="entry name" value="P-loop containing nucleotide triphosphate hydrolases"/>
    <property type="match status" value="1"/>
</dbReference>
<dbReference type="HAMAP" id="MF_00109">
    <property type="entry name" value="Shikimate_kinase"/>
    <property type="match status" value="1"/>
</dbReference>
<dbReference type="InterPro" id="IPR027417">
    <property type="entry name" value="P-loop_NTPase"/>
</dbReference>
<dbReference type="InterPro" id="IPR031322">
    <property type="entry name" value="Shikimate/glucono_kinase"/>
</dbReference>
<dbReference type="InterPro" id="IPR000623">
    <property type="entry name" value="Shikimate_kinase/TSH1"/>
</dbReference>
<dbReference type="InterPro" id="IPR023000">
    <property type="entry name" value="Shikimate_kinase_CS"/>
</dbReference>
<dbReference type="PANTHER" id="PTHR21087">
    <property type="entry name" value="SHIKIMATE KINASE"/>
    <property type="match status" value="1"/>
</dbReference>
<dbReference type="PANTHER" id="PTHR21087:SF16">
    <property type="entry name" value="SHIKIMATE KINASE 1, CHLOROPLASTIC"/>
    <property type="match status" value="1"/>
</dbReference>
<dbReference type="Pfam" id="PF01202">
    <property type="entry name" value="SKI"/>
    <property type="match status" value="1"/>
</dbReference>
<dbReference type="PRINTS" id="PR01100">
    <property type="entry name" value="SHIKIMTKNASE"/>
</dbReference>
<dbReference type="SUPFAM" id="SSF52540">
    <property type="entry name" value="P-loop containing nucleoside triphosphate hydrolases"/>
    <property type="match status" value="1"/>
</dbReference>
<dbReference type="PROSITE" id="PS01128">
    <property type="entry name" value="SHIKIMATE_KINASE"/>
    <property type="match status" value="1"/>
</dbReference>
<evidence type="ECO:0000250" key="1"/>
<evidence type="ECO:0000305" key="2"/>
<organism>
    <name type="scientific">Mycobacterium tuberculosis (strain CDC 1551 / Oshkosh)</name>
    <dbReference type="NCBI Taxonomy" id="83331"/>
    <lineage>
        <taxon>Bacteria</taxon>
        <taxon>Bacillati</taxon>
        <taxon>Actinomycetota</taxon>
        <taxon>Actinomycetes</taxon>
        <taxon>Mycobacteriales</taxon>
        <taxon>Mycobacteriaceae</taxon>
        <taxon>Mycobacterium</taxon>
        <taxon>Mycobacterium tuberculosis complex</taxon>
    </lineage>
</organism>
<feature type="chain" id="PRO_0000426872" description="Shikimate kinase">
    <location>
        <begin position="1"/>
        <end position="176"/>
    </location>
</feature>
<feature type="region of interest" description="LID domain" evidence="1">
    <location>
        <begin position="112"/>
        <end position="124"/>
    </location>
</feature>
<feature type="binding site" evidence="1">
    <location>
        <begin position="12"/>
        <end position="17"/>
    </location>
    <ligand>
        <name>ATP</name>
        <dbReference type="ChEBI" id="CHEBI:30616"/>
    </ligand>
</feature>
<feature type="binding site" evidence="1">
    <location>
        <position position="16"/>
    </location>
    <ligand>
        <name>Mg(2+)</name>
        <dbReference type="ChEBI" id="CHEBI:18420"/>
    </ligand>
</feature>
<feature type="binding site" evidence="1">
    <location>
        <position position="34"/>
    </location>
    <ligand>
        <name>substrate</name>
    </ligand>
</feature>
<feature type="binding site" evidence="1">
    <location>
        <position position="58"/>
    </location>
    <ligand>
        <name>substrate</name>
    </ligand>
</feature>
<feature type="binding site" evidence="1">
    <location>
        <position position="80"/>
    </location>
    <ligand>
        <name>substrate</name>
    </ligand>
</feature>
<feature type="binding site" evidence="1">
    <location>
        <position position="117"/>
    </location>
    <ligand>
        <name>ATP</name>
        <dbReference type="ChEBI" id="CHEBI:30616"/>
    </ligand>
</feature>
<feature type="binding site" evidence="1">
    <location>
        <position position="136"/>
    </location>
    <ligand>
        <name>substrate</name>
    </ligand>
</feature>
<feature type="binding site" evidence="1">
    <location>
        <position position="153"/>
    </location>
    <ligand>
        <name>ATP</name>
        <dbReference type="ChEBI" id="CHEBI:30616"/>
    </ligand>
</feature>
<protein>
    <recommendedName>
        <fullName>Shikimate kinase</fullName>
        <shortName>SK</shortName>
        <ecNumber>2.7.1.71</ecNumber>
    </recommendedName>
</protein>
<name>AROK_MYCTO</name>
<comment type="function">
    <text evidence="1">Catalyzes the specific phosphorylation of the 3-hydroxyl group of shikimic acid using ATP as a cosubstrate.</text>
</comment>
<comment type="catalytic activity">
    <reaction>
        <text>shikimate + ATP = 3-phosphoshikimate + ADP + H(+)</text>
        <dbReference type="Rhea" id="RHEA:13121"/>
        <dbReference type="ChEBI" id="CHEBI:15378"/>
        <dbReference type="ChEBI" id="CHEBI:30616"/>
        <dbReference type="ChEBI" id="CHEBI:36208"/>
        <dbReference type="ChEBI" id="CHEBI:145989"/>
        <dbReference type="ChEBI" id="CHEBI:456216"/>
        <dbReference type="EC" id="2.7.1.71"/>
    </reaction>
</comment>
<comment type="cofactor">
    <cofactor evidence="1">
        <name>Mg(2+)</name>
        <dbReference type="ChEBI" id="CHEBI:18420"/>
    </cofactor>
    <text evidence="1">Binds 1 Mg(2+) ion per subunit.</text>
</comment>
<comment type="pathway">
    <text>Metabolic intermediate biosynthesis; chorismate biosynthesis; chorismate from D-erythrose 4-phosphate and phosphoenolpyruvate: step 5/7.</text>
</comment>
<comment type="subunit">
    <text evidence="1">Monomer.</text>
</comment>
<comment type="subcellular location">
    <subcellularLocation>
        <location evidence="1">Cytoplasm</location>
    </subcellularLocation>
</comment>
<comment type="domain">
    <text evidence="1">Consists of three domains: the CORE domain which forms the binding site for nucleotides, the LID domain which closes over the active site upon ATP or shikimate binding, and the substrate-binding domain which functions to recognize and bind shikimate.</text>
</comment>
<comment type="similarity">
    <text evidence="2">Belongs to the shikimate kinase family.</text>
</comment>
<keyword id="KW-0028">Amino-acid biosynthesis</keyword>
<keyword id="KW-0057">Aromatic amino acid biosynthesis</keyword>
<keyword id="KW-0067">ATP-binding</keyword>
<keyword id="KW-0963">Cytoplasm</keyword>
<keyword id="KW-0418">Kinase</keyword>
<keyword id="KW-0460">Magnesium</keyword>
<keyword id="KW-0479">Metal-binding</keyword>
<keyword id="KW-0547">Nucleotide-binding</keyword>
<keyword id="KW-1185">Reference proteome</keyword>
<keyword id="KW-0808">Transferase</keyword>